<protein>
    <recommendedName>
        <fullName evidence="1">Small ribosomal subunit protein uS3</fullName>
    </recommendedName>
    <alternativeName>
        <fullName evidence="3">30S ribosomal protein S3</fullName>
    </alternativeName>
</protein>
<name>RS3_SYNPW</name>
<sequence>MGHKIHPTGLRLGITQEHRSRWYASSKSYPTLLKEDDRIRKFIHKKYGSAGISDVLIARKADQLEVELKTARPGVLVGRQGSGIEELRSGIQKTVGDPNRQVRINVVEVERVDADAFLLAEYIAQQLEKRVAFRRTIRMAVQRAQRAGVLGLKIQVSGRLNGAEIARTEWTREGRVPLHTLRADIDYATKVASTTYGVLGIKVWVFKGEVLGDEAQQQLPVGATPRRRAGRRPQQFEDRSNEG</sequence>
<reference key="1">
    <citation type="submission" date="2006-05" db="EMBL/GenBank/DDBJ databases">
        <authorList>
            <consortium name="Genoscope"/>
        </authorList>
    </citation>
    <scope>NUCLEOTIDE SEQUENCE [LARGE SCALE GENOMIC DNA]</scope>
    <source>
        <strain>WH7803</strain>
    </source>
</reference>
<dbReference type="EMBL" id="CT971583">
    <property type="protein sequence ID" value="CAK22854.1"/>
    <property type="molecule type" value="Genomic_DNA"/>
</dbReference>
<dbReference type="SMR" id="A5GIT9"/>
<dbReference type="STRING" id="32051.SynWH7803_0428"/>
<dbReference type="KEGG" id="syx:SynWH7803_0428"/>
<dbReference type="eggNOG" id="COG0092">
    <property type="taxonomic scope" value="Bacteria"/>
</dbReference>
<dbReference type="HOGENOM" id="CLU_058591_0_2_3"/>
<dbReference type="OrthoDB" id="9806396at2"/>
<dbReference type="Proteomes" id="UP000001566">
    <property type="component" value="Chromosome"/>
</dbReference>
<dbReference type="GO" id="GO:0022627">
    <property type="term" value="C:cytosolic small ribosomal subunit"/>
    <property type="evidence" value="ECO:0007669"/>
    <property type="project" value="TreeGrafter"/>
</dbReference>
<dbReference type="GO" id="GO:0003729">
    <property type="term" value="F:mRNA binding"/>
    <property type="evidence" value="ECO:0007669"/>
    <property type="project" value="UniProtKB-UniRule"/>
</dbReference>
<dbReference type="GO" id="GO:0019843">
    <property type="term" value="F:rRNA binding"/>
    <property type="evidence" value="ECO:0007669"/>
    <property type="project" value="UniProtKB-UniRule"/>
</dbReference>
<dbReference type="GO" id="GO:0003735">
    <property type="term" value="F:structural constituent of ribosome"/>
    <property type="evidence" value="ECO:0007669"/>
    <property type="project" value="InterPro"/>
</dbReference>
<dbReference type="GO" id="GO:0006412">
    <property type="term" value="P:translation"/>
    <property type="evidence" value="ECO:0007669"/>
    <property type="project" value="UniProtKB-UniRule"/>
</dbReference>
<dbReference type="CDD" id="cd02412">
    <property type="entry name" value="KH-II_30S_S3"/>
    <property type="match status" value="1"/>
</dbReference>
<dbReference type="FunFam" id="3.30.300.20:FF:000001">
    <property type="entry name" value="30S ribosomal protein S3"/>
    <property type="match status" value="1"/>
</dbReference>
<dbReference type="Gene3D" id="3.30.300.20">
    <property type="match status" value="1"/>
</dbReference>
<dbReference type="Gene3D" id="3.30.1140.32">
    <property type="entry name" value="Ribosomal protein S3, C-terminal domain"/>
    <property type="match status" value="1"/>
</dbReference>
<dbReference type="HAMAP" id="MF_01309_B">
    <property type="entry name" value="Ribosomal_uS3_B"/>
    <property type="match status" value="1"/>
</dbReference>
<dbReference type="InterPro" id="IPR004087">
    <property type="entry name" value="KH_dom"/>
</dbReference>
<dbReference type="InterPro" id="IPR015946">
    <property type="entry name" value="KH_dom-like_a/b"/>
</dbReference>
<dbReference type="InterPro" id="IPR004044">
    <property type="entry name" value="KH_dom_type_2"/>
</dbReference>
<dbReference type="InterPro" id="IPR009019">
    <property type="entry name" value="KH_sf_prok-type"/>
</dbReference>
<dbReference type="InterPro" id="IPR036419">
    <property type="entry name" value="Ribosomal_S3_C_sf"/>
</dbReference>
<dbReference type="InterPro" id="IPR005704">
    <property type="entry name" value="Ribosomal_uS3_bac-typ"/>
</dbReference>
<dbReference type="InterPro" id="IPR001351">
    <property type="entry name" value="Ribosomal_uS3_C"/>
</dbReference>
<dbReference type="InterPro" id="IPR018280">
    <property type="entry name" value="Ribosomal_uS3_CS"/>
</dbReference>
<dbReference type="NCBIfam" id="TIGR01009">
    <property type="entry name" value="rpsC_bact"/>
    <property type="match status" value="1"/>
</dbReference>
<dbReference type="PANTHER" id="PTHR11760">
    <property type="entry name" value="30S/40S RIBOSOMAL PROTEIN S3"/>
    <property type="match status" value="1"/>
</dbReference>
<dbReference type="PANTHER" id="PTHR11760:SF19">
    <property type="entry name" value="SMALL RIBOSOMAL SUBUNIT PROTEIN US3C"/>
    <property type="match status" value="1"/>
</dbReference>
<dbReference type="Pfam" id="PF07650">
    <property type="entry name" value="KH_2"/>
    <property type="match status" value="1"/>
</dbReference>
<dbReference type="Pfam" id="PF00189">
    <property type="entry name" value="Ribosomal_S3_C"/>
    <property type="match status" value="1"/>
</dbReference>
<dbReference type="SMART" id="SM00322">
    <property type="entry name" value="KH"/>
    <property type="match status" value="1"/>
</dbReference>
<dbReference type="SUPFAM" id="SSF54814">
    <property type="entry name" value="Prokaryotic type KH domain (KH-domain type II)"/>
    <property type="match status" value="1"/>
</dbReference>
<dbReference type="SUPFAM" id="SSF54821">
    <property type="entry name" value="Ribosomal protein S3 C-terminal domain"/>
    <property type="match status" value="1"/>
</dbReference>
<dbReference type="PROSITE" id="PS50823">
    <property type="entry name" value="KH_TYPE_2"/>
    <property type="match status" value="1"/>
</dbReference>
<dbReference type="PROSITE" id="PS00548">
    <property type="entry name" value="RIBOSOMAL_S3"/>
    <property type="match status" value="1"/>
</dbReference>
<gene>
    <name evidence="1" type="primary">rpsC</name>
    <name evidence="1" type="synonym">rps3</name>
    <name type="ordered locus">SynWH7803_0428</name>
</gene>
<proteinExistence type="inferred from homology"/>
<keyword id="KW-1185">Reference proteome</keyword>
<keyword id="KW-0687">Ribonucleoprotein</keyword>
<keyword id="KW-0689">Ribosomal protein</keyword>
<keyword id="KW-0694">RNA-binding</keyword>
<keyword id="KW-0699">rRNA-binding</keyword>
<organism>
    <name type="scientific">Synechococcus sp. (strain WH7803)</name>
    <dbReference type="NCBI Taxonomy" id="32051"/>
    <lineage>
        <taxon>Bacteria</taxon>
        <taxon>Bacillati</taxon>
        <taxon>Cyanobacteriota</taxon>
        <taxon>Cyanophyceae</taxon>
        <taxon>Synechococcales</taxon>
        <taxon>Synechococcaceae</taxon>
        <taxon>Synechococcus</taxon>
    </lineage>
</organism>
<evidence type="ECO:0000255" key="1">
    <source>
        <dbReference type="HAMAP-Rule" id="MF_01309"/>
    </source>
</evidence>
<evidence type="ECO:0000256" key="2">
    <source>
        <dbReference type="SAM" id="MobiDB-lite"/>
    </source>
</evidence>
<evidence type="ECO:0000305" key="3"/>
<accession>A5GIT9</accession>
<comment type="function">
    <text evidence="1">Binds the lower part of the 30S subunit head. Binds mRNA in the 70S ribosome, positioning it for translation.</text>
</comment>
<comment type="subunit">
    <text evidence="1">Part of the 30S ribosomal subunit. Forms a tight complex with proteins S10 and S14.</text>
</comment>
<comment type="similarity">
    <text evidence="1">Belongs to the universal ribosomal protein uS3 family.</text>
</comment>
<feature type="chain" id="PRO_1000086165" description="Small ribosomal subunit protein uS3">
    <location>
        <begin position="1"/>
        <end position="243"/>
    </location>
</feature>
<feature type="domain" description="KH type-2" evidence="1">
    <location>
        <begin position="39"/>
        <end position="110"/>
    </location>
</feature>
<feature type="region of interest" description="Disordered" evidence="2">
    <location>
        <begin position="217"/>
        <end position="243"/>
    </location>
</feature>
<feature type="compositionally biased region" description="Basic and acidic residues" evidence="2">
    <location>
        <begin position="234"/>
        <end position="243"/>
    </location>
</feature>